<protein>
    <recommendedName>
        <fullName evidence="1">Phosphate acyltransferase</fullName>
        <ecNumber evidence="1">2.3.1.274</ecNumber>
    </recommendedName>
    <alternativeName>
        <fullName evidence="1">Acyl-ACP phosphotransacylase</fullName>
    </alternativeName>
    <alternativeName>
        <fullName evidence="1">Acyl-[acyl-carrier-protein]--phosphate acyltransferase</fullName>
    </alternativeName>
    <alternativeName>
        <fullName evidence="1">Phosphate-acyl-ACP acyltransferase</fullName>
    </alternativeName>
</protein>
<dbReference type="EC" id="2.3.1.274" evidence="1"/>
<dbReference type="EMBL" id="CP000783">
    <property type="protein sequence ID" value="ABU77504.1"/>
    <property type="status" value="ALT_INIT"/>
    <property type="molecule type" value="Genomic_DNA"/>
</dbReference>
<dbReference type="RefSeq" id="WP_071818011.1">
    <property type="nucleotide sequence ID" value="NC_009778.1"/>
</dbReference>
<dbReference type="SMR" id="A7MFQ5"/>
<dbReference type="KEGG" id="esa:ESA_02255"/>
<dbReference type="PATRIC" id="fig|290339.8.peg.2015"/>
<dbReference type="HOGENOM" id="CLU_039379_1_0_6"/>
<dbReference type="UniPathway" id="UPA00085"/>
<dbReference type="Proteomes" id="UP000000260">
    <property type="component" value="Chromosome"/>
</dbReference>
<dbReference type="GO" id="GO:0005737">
    <property type="term" value="C:cytoplasm"/>
    <property type="evidence" value="ECO:0007669"/>
    <property type="project" value="UniProtKB-SubCell"/>
</dbReference>
<dbReference type="GO" id="GO:0043811">
    <property type="term" value="F:phosphate:acyl-[acyl carrier protein] acyltransferase activity"/>
    <property type="evidence" value="ECO:0007669"/>
    <property type="project" value="UniProtKB-UniRule"/>
</dbReference>
<dbReference type="GO" id="GO:0006633">
    <property type="term" value="P:fatty acid biosynthetic process"/>
    <property type="evidence" value="ECO:0007669"/>
    <property type="project" value="UniProtKB-UniRule"/>
</dbReference>
<dbReference type="GO" id="GO:0008654">
    <property type="term" value="P:phospholipid biosynthetic process"/>
    <property type="evidence" value="ECO:0007669"/>
    <property type="project" value="UniProtKB-KW"/>
</dbReference>
<dbReference type="FunFam" id="3.40.718.10:FF:000008">
    <property type="entry name" value="Phosphate acyltransferase"/>
    <property type="match status" value="1"/>
</dbReference>
<dbReference type="Gene3D" id="3.40.718.10">
    <property type="entry name" value="Isopropylmalate Dehydrogenase"/>
    <property type="match status" value="1"/>
</dbReference>
<dbReference type="HAMAP" id="MF_00019">
    <property type="entry name" value="PlsX"/>
    <property type="match status" value="1"/>
</dbReference>
<dbReference type="InterPro" id="IPR003664">
    <property type="entry name" value="FA_synthesis"/>
</dbReference>
<dbReference type="InterPro" id="IPR012281">
    <property type="entry name" value="Phospholipid_synth_PlsX-like"/>
</dbReference>
<dbReference type="NCBIfam" id="TIGR00182">
    <property type="entry name" value="plsX"/>
    <property type="match status" value="1"/>
</dbReference>
<dbReference type="PANTHER" id="PTHR30100">
    <property type="entry name" value="FATTY ACID/PHOSPHOLIPID SYNTHESIS PROTEIN PLSX"/>
    <property type="match status" value="1"/>
</dbReference>
<dbReference type="PANTHER" id="PTHR30100:SF1">
    <property type="entry name" value="PHOSPHATE ACYLTRANSFERASE"/>
    <property type="match status" value="1"/>
</dbReference>
<dbReference type="Pfam" id="PF02504">
    <property type="entry name" value="FA_synthesis"/>
    <property type="match status" value="1"/>
</dbReference>
<dbReference type="PIRSF" id="PIRSF002465">
    <property type="entry name" value="Phsphlp_syn_PlsX"/>
    <property type="match status" value="1"/>
</dbReference>
<dbReference type="SUPFAM" id="SSF53659">
    <property type="entry name" value="Isocitrate/Isopropylmalate dehydrogenase-like"/>
    <property type="match status" value="1"/>
</dbReference>
<comment type="function">
    <text evidence="1">Catalyzes the reversible formation of acyl-phosphate (acyl-PO(4)) from acyl-[acyl-carrier-protein] (acyl-ACP). This enzyme utilizes acyl-ACP as fatty acyl donor, but not acyl-CoA.</text>
</comment>
<comment type="catalytic activity">
    <reaction evidence="1">
        <text>a fatty acyl-[ACP] + phosphate = an acyl phosphate + holo-[ACP]</text>
        <dbReference type="Rhea" id="RHEA:42292"/>
        <dbReference type="Rhea" id="RHEA-COMP:9685"/>
        <dbReference type="Rhea" id="RHEA-COMP:14125"/>
        <dbReference type="ChEBI" id="CHEBI:43474"/>
        <dbReference type="ChEBI" id="CHEBI:59918"/>
        <dbReference type="ChEBI" id="CHEBI:64479"/>
        <dbReference type="ChEBI" id="CHEBI:138651"/>
        <dbReference type="EC" id="2.3.1.274"/>
    </reaction>
</comment>
<comment type="pathway">
    <text evidence="1">Lipid metabolism; phospholipid metabolism.</text>
</comment>
<comment type="subunit">
    <text evidence="1">Homodimer. Probably interacts with PlsY.</text>
</comment>
<comment type="subcellular location">
    <subcellularLocation>
        <location evidence="1">Cytoplasm</location>
    </subcellularLocation>
    <text evidence="1">Associated with the membrane possibly through PlsY.</text>
</comment>
<comment type="similarity">
    <text evidence="1">Belongs to the PlsX family.</text>
</comment>
<comment type="sequence caution" evidence="2">
    <conflict type="erroneous initiation">
        <sequence resource="EMBL-CDS" id="ABU77504"/>
    </conflict>
</comment>
<sequence>MTPLTLALDVMGGDFGPAVTVPAALQALNSDPHLHLLLVGDPDAITPLLARADFEQRSRLQIIAAESVIASDVRPSQAVRNSRGSSMRIALELVKEGRAQACISAGNTGALMGLAKLLLKPVDGIERPALVTVLPHQQKGKTVVLDLGANVDCDSTMLAQFAIMGSVMAEEALGIENPRVALLNIGEEETKGLDSIRDAAALLKTVPSLNYIGYLEANELLTGKTDVLVCDGFVGNVTLKTMEGVVRMFLSLLKSQGEGKKRSWWWLLLKRWLQKSLSRRFSHLNPDQYNGACLLGLRGTVIKSHGAANQRAFAVAIEQAVQAVQRQVPQRIAARLESVLPKSD</sequence>
<keyword id="KW-0963">Cytoplasm</keyword>
<keyword id="KW-0444">Lipid biosynthesis</keyword>
<keyword id="KW-0443">Lipid metabolism</keyword>
<keyword id="KW-0594">Phospholipid biosynthesis</keyword>
<keyword id="KW-1208">Phospholipid metabolism</keyword>
<keyword id="KW-1185">Reference proteome</keyword>
<keyword id="KW-0808">Transferase</keyword>
<reference key="1">
    <citation type="journal article" date="2010" name="PLoS ONE">
        <title>Genome sequence of Cronobacter sakazakii BAA-894 and comparative genomic hybridization analysis with other Cronobacter species.</title>
        <authorList>
            <person name="Kucerova E."/>
            <person name="Clifton S.W."/>
            <person name="Xia X.Q."/>
            <person name="Long F."/>
            <person name="Porwollik S."/>
            <person name="Fulton L."/>
            <person name="Fronick C."/>
            <person name="Minx P."/>
            <person name="Kyung K."/>
            <person name="Warren W."/>
            <person name="Fulton R."/>
            <person name="Feng D."/>
            <person name="Wollam A."/>
            <person name="Shah N."/>
            <person name="Bhonagiri V."/>
            <person name="Nash W.E."/>
            <person name="Hallsworth-Pepin K."/>
            <person name="Wilson R.K."/>
            <person name="McClelland M."/>
            <person name="Forsythe S.J."/>
        </authorList>
    </citation>
    <scope>NUCLEOTIDE SEQUENCE [LARGE SCALE GENOMIC DNA]</scope>
    <source>
        <strain>ATCC BAA-894</strain>
    </source>
</reference>
<evidence type="ECO:0000255" key="1">
    <source>
        <dbReference type="HAMAP-Rule" id="MF_00019"/>
    </source>
</evidence>
<evidence type="ECO:0000305" key="2"/>
<feature type="chain" id="PRO_0000329225" description="Phosphate acyltransferase">
    <location>
        <begin position="1"/>
        <end position="344"/>
    </location>
</feature>
<name>PLSX_CROS8</name>
<proteinExistence type="inferred from homology"/>
<organism>
    <name type="scientific">Cronobacter sakazakii (strain ATCC BAA-894)</name>
    <name type="common">Enterobacter sakazakii</name>
    <dbReference type="NCBI Taxonomy" id="290339"/>
    <lineage>
        <taxon>Bacteria</taxon>
        <taxon>Pseudomonadati</taxon>
        <taxon>Pseudomonadota</taxon>
        <taxon>Gammaproteobacteria</taxon>
        <taxon>Enterobacterales</taxon>
        <taxon>Enterobacteriaceae</taxon>
        <taxon>Cronobacter</taxon>
    </lineage>
</organism>
<accession>A7MFQ5</accession>
<gene>
    <name evidence="1" type="primary">plsX</name>
    <name type="ordered locus">ESA_02255</name>
</gene>